<sequence>MLKLTPRQAEILAFIKRCLEDNGYPPTRAEIAQELGFKSPNAAEEHLKALARKGAIEMTPGASRGIRIPGFEAKPDDSSLPIIGRVAAGAPILAEQHIEESCNINPAFFHPRADYLLRVHGMSMKDIGIFDGDLLAVHTTREARNGQVVVARIGDEVTVKRFKREGSKVWLIAENPEFAPIEVNLKDQDLVIEGLSVGVIRR</sequence>
<dbReference type="EC" id="3.4.21.88" evidence="1"/>
<dbReference type="EMBL" id="AF502251">
    <property type="protein sequence ID" value="AAM52308.1"/>
    <property type="molecule type" value="Genomic_DNA"/>
</dbReference>
<dbReference type="RefSeq" id="WP_007921301.1">
    <property type="nucleotide sequence ID" value="NZ_CP027712.1"/>
</dbReference>
<dbReference type="SMR" id="Q8KT78"/>
<dbReference type="MEROPS" id="S24.001"/>
<dbReference type="GeneID" id="61649638"/>
<dbReference type="GeneID" id="93402579"/>
<dbReference type="GO" id="GO:0003677">
    <property type="term" value="F:DNA binding"/>
    <property type="evidence" value="ECO:0007669"/>
    <property type="project" value="UniProtKB-UniRule"/>
</dbReference>
<dbReference type="GO" id="GO:0004252">
    <property type="term" value="F:serine-type endopeptidase activity"/>
    <property type="evidence" value="ECO:0007669"/>
    <property type="project" value="UniProtKB-UniRule"/>
</dbReference>
<dbReference type="GO" id="GO:0006281">
    <property type="term" value="P:DNA repair"/>
    <property type="evidence" value="ECO:0007669"/>
    <property type="project" value="UniProtKB-UniRule"/>
</dbReference>
<dbReference type="GO" id="GO:0006260">
    <property type="term" value="P:DNA replication"/>
    <property type="evidence" value="ECO:0007669"/>
    <property type="project" value="UniProtKB-UniRule"/>
</dbReference>
<dbReference type="GO" id="GO:0045892">
    <property type="term" value="P:negative regulation of DNA-templated transcription"/>
    <property type="evidence" value="ECO:0007669"/>
    <property type="project" value="UniProtKB-UniRule"/>
</dbReference>
<dbReference type="GO" id="GO:0006508">
    <property type="term" value="P:proteolysis"/>
    <property type="evidence" value="ECO:0007669"/>
    <property type="project" value="InterPro"/>
</dbReference>
<dbReference type="GO" id="GO:0009432">
    <property type="term" value="P:SOS response"/>
    <property type="evidence" value="ECO:0007669"/>
    <property type="project" value="UniProtKB-UniRule"/>
</dbReference>
<dbReference type="CDD" id="cd06529">
    <property type="entry name" value="S24_LexA-like"/>
    <property type="match status" value="1"/>
</dbReference>
<dbReference type="FunFam" id="1.10.10.10:FF:000009">
    <property type="entry name" value="LexA repressor"/>
    <property type="match status" value="1"/>
</dbReference>
<dbReference type="FunFam" id="2.10.109.10:FF:000001">
    <property type="entry name" value="LexA repressor"/>
    <property type="match status" value="1"/>
</dbReference>
<dbReference type="Gene3D" id="2.10.109.10">
    <property type="entry name" value="Umud Fragment, subunit A"/>
    <property type="match status" value="1"/>
</dbReference>
<dbReference type="Gene3D" id="1.10.10.10">
    <property type="entry name" value="Winged helix-like DNA-binding domain superfamily/Winged helix DNA-binding domain"/>
    <property type="match status" value="1"/>
</dbReference>
<dbReference type="HAMAP" id="MF_00015">
    <property type="entry name" value="LexA"/>
    <property type="match status" value="1"/>
</dbReference>
<dbReference type="InterPro" id="IPR006200">
    <property type="entry name" value="LexA"/>
</dbReference>
<dbReference type="InterPro" id="IPR039418">
    <property type="entry name" value="LexA-like"/>
</dbReference>
<dbReference type="InterPro" id="IPR036286">
    <property type="entry name" value="LexA/Signal_pep-like_sf"/>
</dbReference>
<dbReference type="InterPro" id="IPR006199">
    <property type="entry name" value="LexA_DNA-bd_dom"/>
</dbReference>
<dbReference type="InterPro" id="IPR050077">
    <property type="entry name" value="LexA_repressor"/>
</dbReference>
<dbReference type="InterPro" id="IPR006197">
    <property type="entry name" value="Peptidase_S24_LexA"/>
</dbReference>
<dbReference type="InterPro" id="IPR015927">
    <property type="entry name" value="Peptidase_S24_S26A/B/C"/>
</dbReference>
<dbReference type="InterPro" id="IPR036388">
    <property type="entry name" value="WH-like_DNA-bd_sf"/>
</dbReference>
<dbReference type="InterPro" id="IPR036390">
    <property type="entry name" value="WH_DNA-bd_sf"/>
</dbReference>
<dbReference type="NCBIfam" id="TIGR00498">
    <property type="entry name" value="lexA"/>
    <property type="match status" value="1"/>
</dbReference>
<dbReference type="PANTHER" id="PTHR33516">
    <property type="entry name" value="LEXA REPRESSOR"/>
    <property type="match status" value="1"/>
</dbReference>
<dbReference type="PANTHER" id="PTHR33516:SF2">
    <property type="entry name" value="LEXA REPRESSOR-RELATED"/>
    <property type="match status" value="1"/>
</dbReference>
<dbReference type="Pfam" id="PF01726">
    <property type="entry name" value="LexA_DNA_bind"/>
    <property type="match status" value="1"/>
</dbReference>
<dbReference type="Pfam" id="PF00717">
    <property type="entry name" value="Peptidase_S24"/>
    <property type="match status" value="1"/>
</dbReference>
<dbReference type="PRINTS" id="PR00726">
    <property type="entry name" value="LEXASERPTASE"/>
</dbReference>
<dbReference type="SUPFAM" id="SSF51306">
    <property type="entry name" value="LexA/Signal peptidase"/>
    <property type="match status" value="1"/>
</dbReference>
<dbReference type="SUPFAM" id="SSF46785">
    <property type="entry name" value="Winged helix' DNA-binding domain"/>
    <property type="match status" value="1"/>
</dbReference>
<accession>Q8KT78</accession>
<protein>
    <recommendedName>
        <fullName evidence="1">LexA repressor</fullName>
        <ecNumber evidence="1">3.4.21.88</ecNumber>
    </recommendedName>
</protein>
<name>LEXA_PSECL</name>
<reference key="1">
    <citation type="submission" date="2002-04" db="EMBL/GenBank/DDBJ databases">
        <title>The psrA gene, of which the expression is under control of GacS, suppresses the production of the antifungal metabolite phenazine-1-carboxamide of Pseudomonas chlororaphis PCL1391.</title>
        <authorList>
            <person name="Chin-A-Woeng T.F.C."/>
            <person name="van den Broek D."/>
            <person name="Lugtenberg B.J.J."/>
            <person name="Bloemberg G.V."/>
        </authorList>
    </citation>
    <scope>NUCLEOTIDE SEQUENCE [GENOMIC DNA]</scope>
    <source>
        <strain>PCL1391</strain>
    </source>
</reference>
<feature type="chain" id="PRO_0000170068" description="LexA repressor">
    <location>
        <begin position="1"/>
        <end position="202"/>
    </location>
</feature>
<feature type="DNA-binding region" description="H-T-H motif" evidence="1">
    <location>
        <begin position="28"/>
        <end position="48"/>
    </location>
</feature>
<feature type="active site" description="For autocatalytic cleavage activity" evidence="1">
    <location>
        <position position="123"/>
    </location>
</feature>
<feature type="active site" description="For autocatalytic cleavage activity" evidence="1">
    <location>
        <position position="160"/>
    </location>
</feature>
<feature type="site" description="Cleavage; by autolysis" evidence="1">
    <location>
        <begin position="88"/>
        <end position="89"/>
    </location>
</feature>
<comment type="function">
    <text evidence="1">Represses a number of genes involved in the response to DNA damage (SOS response), including recA and lexA. In the presence of single-stranded DNA, RecA interacts with LexA causing an autocatalytic cleavage which disrupts the DNA-binding part of LexA, leading to derepression of the SOS regulon and eventually DNA repair.</text>
</comment>
<comment type="catalytic activity">
    <reaction evidence="1">
        <text>Hydrolysis of Ala-|-Gly bond in repressor LexA.</text>
        <dbReference type="EC" id="3.4.21.88"/>
    </reaction>
</comment>
<comment type="subunit">
    <text evidence="1">Homodimer.</text>
</comment>
<comment type="similarity">
    <text evidence="1">Belongs to the peptidase S24 family.</text>
</comment>
<keyword id="KW-0068">Autocatalytic cleavage</keyword>
<keyword id="KW-0227">DNA damage</keyword>
<keyword id="KW-0234">DNA repair</keyword>
<keyword id="KW-0235">DNA replication</keyword>
<keyword id="KW-0238">DNA-binding</keyword>
<keyword id="KW-0378">Hydrolase</keyword>
<keyword id="KW-0678">Repressor</keyword>
<keyword id="KW-0742">SOS response</keyword>
<keyword id="KW-0804">Transcription</keyword>
<keyword id="KW-0805">Transcription regulation</keyword>
<organism>
    <name type="scientific">Pseudomonas chlororaphis</name>
    <name type="common">Pseudomonas aureofaciens</name>
    <dbReference type="NCBI Taxonomy" id="333"/>
    <lineage>
        <taxon>Bacteria</taxon>
        <taxon>Pseudomonadati</taxon>
        <taxon>Pseudomonadota</taxon>
        <taxon>Gammaproteobacteria</taxon>
        <taxon>Pseudomonadales</taxon>
        <taxon>Pseudomonadaceae</taxon>
        <taxon>Pseudomonas</taxon>
    </lineage>
</organism>
<evidence type="ECO:0000255" key="1">
    <source>
        <dbReference type="HAMAP-Rule" id="MF_00015"/>
    </source>
</evidence>
<gene>
    <name evidence="1" type="primary">lexA</name>
</gene>
<proteinExistence type="inferred from homology"/>